<sequence>MRLVQLSRHSIAFPSPEGALREPNGLLALGGDLSPARLLMAYQHGIFPWFSPGDPILWWSPDPRAVLWPEKFHLSRSMKRFHNASPYRVTLNYAFDRVIDGCANHRDEGTWITRGIEEAYRRLHELGHAHSIEVWRDQELVGGMYGVSQGALFCGESMFSRQENASKTALLVFCAEFIRHGGKLIDCQVLNSHTASLGAIEIPRRDYLDHLAGLRQQPLASRFWVPRTLFLPRK</sequence>
<name>LFTR_SALPK</name>
<gene>
    <name evidence="1" type="primary">aat</name>
    <name type="ordered locus">SSPA1715</name>
</gene>
<accession>B5BBS0</accession>
<proteinExistence type="inferred from homology"/>
<dbReference type="EC" id="2.3.2.6" evidence="1"/>
<dbReference type="EMBL" id="FM200053">
    <property type="protein sequence ID" value="CAR59908.1"/>
    <property type="molecule type" value="Genomic_DNA"/>
</dbReference>
<dbReference type="RefSeq" id="WP_001241641.1">
    <property type="nucleotide sequence ID" value="NC_011147.1"/>
</dbReference>
<dbReference type="SMR" id="B5BBS0"/>
<dbReference type="KEGG" id="sek:SSPA1715"/>
<dbReference type="HOGENOM" id="CLU_075045_0_0_6"/>
<dbReference type="Proteomes" id="UP000001869">
    <property type="component" value="Chromosome"/>
</dbReference>
<dbReference type="GO" id="GO:0005737">
    <property type="term" value="C:cytoplasm"/>
    <property type="evidence" value="ECO:0007669"/>
    <property type="project" value="UniProtKB-SubCell"/>
</dbReference>
<dbReference type="GO" id="GO:0008914">
    <property type="term" value="F:leucyl-tRNA--protein transferase activity"/>
    <property type="evidence" value="ECO:0007669"/>
    <property type="project" value="UniProtKB-UniRule"/>
</dbReference>
<dbReference type="GO" id="GO:0030163">
    <property type="term" value="P:protein catabolic process"/>
    <property type="evidence" value="ECO:0007669"/>
    <property type="project" value="UniProtKB-UniRule"/>
</dbReference>
<dbReference type="FunFam" id="3.30.70.3550:FF:000001">
    <property type="entry name" value="Leucyl/phenylalanyl-tRNA--protein transferase"/>
    <property type="match status" value="1"/>
</dbReference>
<dbReference type="FunFam" id="3.40.630.70:FF:000001">
    <property type="entry name" value="Leucyl/phenylalanyl-tRNA--protein transferase"/>
    <property type="match status" value="1"/>
</dbReference>
<dbReference type="Gene3D" id="3.40.630.70">
    <property type="entry name" value="Leucyl/phenylalanyl-tRNA-protein transferase, C-terminal domain"/>
    <property type="match status" value="1"/>
</dbReference>
<dbReference type="Gene3D" id="3.30.70.3550">
    <property type="entry name" value="Leucyl/phenylalanyl-tRNA-protein transferase, N-terminal domain"/>
    <property type="match status" value="1"/>
</dbReference>
<dbReference type="HAMAP" id="MF_00688">
    <property type="entry name" value="Leu_Phe_trans"/>
    <property type="match status" value="1"/>
</dbReference>
<dbReference type="InterPro" id="IPR016181">
    <property type="entry name" value="Acyl_CoA_acyltransferase"/>
</dbReference>
<dbReference type="InterPro" id="IPR004616">
    <property type="entry name" value="Leu/Phe-tRNA_Trfase"/>
</dbReference>
<dbReference type="InterPro" id="IPR042203">
    <property type="entry name" value="Leu/Phe-tRNA_Trfase_C"/>
</dbReference>
<dbReference type="InterPro" id="IPR042221">
    <property type="entry name" value="Leu/Phe-tRNA_Trfase_N"/>
</dbReference>
<dbReference type="NCBIfam" id="TIGR00667">
    <property type="entry name" value="aat"/>
    <property type="match status" value="1"/>
</dbReference>
<dbReference type="PANTHER" id="PTHR30098">
    <property type="entry name" value="LEUCYL/PHENYLALANYL-TRNA--PROTEIN TRANSFERASE"/>
    <property type="match status" value="1"/>
</dbReference>
<dbReference type="PANTHER" id="PTHR30098:SF2">
    <property type="entry name" value="LEUCYL_PHENYLALANYL-TRNA--PROTEIN TRANSFERASE"/>
    <property type="match status" value="1"/>
</dbReference>
<dbReference type="Pfam" id="PF03588">
    <property type="entry name" value="Leu_Phe_trans"/>
    <property type="match status" value="1"/>
</dbReference>
<dbReference type="SUPFAM" id="SSF55729">
    <property type="entry name" value="Acyl-CoA N-acyltransferases (Nat)"/>
    <property type="match status" value="1"/>
</dbReference>
<feature type="chain" id="PRO_1000131950" description="Leucyl/phenylalanyl-tRNA--protein transferase">
    <location>
        <begin position="1"/>
        <end position="234"/>
    </location>
</feature>
<protein>
    <recommendedName>
        <fullName evidence="1">Leucyl/phenylalanyl-tRNA--protein transferase</fullName>
        <ecNumber evidence="1">2.3.2.6</ecNumber>
    </recommendedName>
    <alternativeName>
        <fullName evidence="1">L/F-transferase</fullName>
    </alternativeName>
    <alternativeName>
        <fullName evidence="1">Leucyltransferase</fullName>
    </alternativeName>
    <alternativeName>
        <fullName evidence="1">Phenyalanyltransferase</fullName>
    </alternativeName>
</protein>
<evidence type="ECO:0000255" key="1">
    <source>
        <dbReference type="HAMAP-Rule" id="MF_00688"/>
    </source>
</evidence>
<organism>
    <name type="scientific">Salmonella paratyphi A (strain AKU_12601)</name>
    <dbReference type="NCBI Taxonomy" id="554290"/>
    <lineage>
        <taxon>Bacteria</taxon>
        <taxon>Pseudomonadati</taxon>
        <taxon>Pseudomonadota</taxon>
        <taxon>Gammaproteobacteria</taxon>
        <taxon>Enterobacterales</taxon>
        <taxon>Enterobacteriaceae</taxon>
        <taxon>Salmonella</taxon>
    </lineage>
</organism>
<reference key="1">
    <citation type="journal article" date="2009" name="BMC Genomics">
        <title>Pseudogene accumulation in the evolutionary histories of Salmonella enterica serovars Paratyphi A and Typhi.</title>
        <authorList>
            <person name="Holt K.E."/>
            <person name="Thomson N.R."/>
            <person name="Wain J."/>
            <person name="Langridge G.C."/>
            <person name="Hasan R."/>
            <person name="Bhutta Z.A."/>
            <person name="Quail M.A."/>
            <person name="Norbertczak H."/>
            <person name="Walker D."/>
            <person name="Simmonds M."/>
            <person name="White B."/>
            <person name="Bason N."/>
            <person name="Mungall K."/>
            <person name="Dougan G."/>
            <person name="Parkhill J."/>
        </authorList>
    </citation>
    <scope>NUCLEOTIDE SEQUENCE [LARGE SCALE GENOMIC DNA]</scope>
    <source>
        <strain>AKU_12601</strain>
    </source>
</reference>
<keyword id="KW-0012">Acyltransferase</keyword>
<keyword id="KW-0963">Cytoplasm</keyword>
<keyword id="KW-0808">Transferase</keyword>
<comment type="function">
    <text evidence="1">Functions in the N-end rule pathway of protein degradation where it conjugates Leu, Phe and, less efficiently, Met from aminoacyl-tRNAs to the N-termini of proteins containing an N-terminal arginine or lysine.</text>
</comment>
<comment type="catalytic activity">
    <reaction evidence="1">
        <text>N-terminal L-lysyl-[protein] + L-leucyl-tRNA(Leu) = N-terminal L-leucyl-L-lysyl-[protein] + tRNA(Leu) + H(+)</text>
        <dbReference type="Rhea" id="RHEA:12340"/>
        <dbReference type="Rhea" id="RHEA-COMP:9613"/>
        <dbReference type="Rhea" id="RHEA-COMP:9622"/>
        <dbReference type="Rhea" id="RHEA-COMP:12670"/>
        <dbReference type="Rhea" id="RHEA-COMP:12671"/>
        <dbReference type="ChEBI" id="CHEBI:15378"/>
        <dbReference type="ChEBI" id="CHEBI:65249"/>
        <dbReference type="ChEBI" id="CHEBI:78442"/>
        <dbReference type="ChEBI" id="CHEBI:78494"/>
        <dbReference type="ChEBI" id="CHEBI:133043"/>
        <dbReference type="EC" id="2.3.2.6"/>
    </reaction>
</comment>
<comment type="catalytic activity">
    <reaction evidence="1">
        <text>N-terminal L-arginyl-[protein] + L-leucyl-tRNA(Leu) = N-terminal L-leucyl-L-arginyl-[protein] + tRNA(Leu) + H(+)</text>
        <dbReference type="Rhea" id="RHEA:50416"/>
        <dbReference type="Rhea" id="RHEA-COMP:9613"/>
        <dbReference type="Rhea" id="RHEA-COMP:9622"/>
        <dbReference type="Rhea" id="RHEA-COMP:12672"/>
        <dbReference type="Rhea" id="RHEA-COMP:12673"/>
        <dbReference type="ChEBI" id="CHEBI:15378"/>
        <dbReference type="ChEBI" id="CHEBI:64719"/>
        <dbReference type="ChEBI" id="CHEBI:78442"/>
        <dbReference type="ChEBI" id="CHEBI:78494"/>
        <dbReference type="ChEBI" id="CHEBI:133044"/>
        <dbReference type="EC" id="2.3.2.6"/>
    </reaction>
</comment>
<comment type="catalytic activity">
    <reaction evidence="1">
        <text>L-phenylalanyl-tRNA(Phe) + an N-terminal L-alpha-aminoacyl-[protein] = an N-terminal L-phenylalanyl-L-alpha-aminoacyl-[protein] + tRNA(Phe)</text>
        <dbReference type="Rhea" id="RHEA:43632"/>
        <dbReference type="Rhea" id="RHEA-COMP:9668"/>
        <dbReference type="Rhea" id="RHEA-COMP:9699"/>
        <dbReference type="Rhea" id="RHEA-COMP:10636"/>
        <dbReference type="Rhea" id="RHEA-COMP:10637"/>
        <dbReference type="ChEBI" id="CHEBI:78442"/>
        <dbReference type="ChEBI" id="CHEBI:78531"/>
        <dbReference type="ChEBI" id="CHEBI:78597"/>
        <dbReference type="ChEBI" id="CHEBI:83561"/>
        <dbReference type="EC" id="2.3.2.6"/>
    </reaction>
</comment>
<comment type="subcellular location">
    <subcellularLocation>
        <location evidence="1">Cytoplasm</location>
    </subcellularLocation>
</comment>
<comment type="similarity">
    <text evidence="1">Belongs to the L/F-transferase family.</text>
</comment>